<name>CYSH_CHESB</name>
<comment type="function">
    <text evidence="1">Catalyzes the formation of sulfite from adenosine 5'-phosphosulfate (APS) using thioredoxin as an electron donor.</text>
</comment>
<comment type="catalytic activity">
    <reaction evidence="1">
        <text>[thioredoxin]-disulfide + sulfite + AMP + 2 H(+) = adenosine 5'-phosphosulfate + [thioredoxin]-dithiol</text>
        <dbReference type="Rhea" id="RHEA:21976"/>
        <dbReference type="Rhea" id="RHEA-COMP:10698"/>
        <dbReference type="Rhea" id="RHEA-COMP:10700"/>
        <dbReference type="ChEBI" id="CHEBI:15378"/>
        <dbReference type="ChEBI" id="CHEBI:17359"/>
        <dbReference type="ChEBI" id="CHEBI:29950"/>
        <dbReference type="ChEBI" id="CHEBI:50058"/>
        <dbReference type="ChEBI" id="CHEBI:58243"/>
        <dbReference type="ChEBI" id="CHEBI:456215"/>
        <dbReference type="EC" id="1.8.4.10"/>
    </reaction>
</comment>
<comment type="cofactor">
    <cofactor evidence="1">
        <name>[4Fe-4S] cluster</name>
        <dbReference type="ChEBI" id="CHEBI:49883"/>
    </cofactor>
    <text evidence="1">Binds 1 [4Fe-4S] cluster per subunit.</text>
</comment>
<comment type="pathway">
    <text evidence="1">Sulfur metabolism; hydrogen sulfide biosynthesis; sulfite from sulfate.</text>
</comment>
<comment type="subcellular location">
    <subcellularLocation>
        <location evidence="1">Cytoplasm</location>
    </subcellularLocation>
</comment>
<comment type="similarity">
    <text evidence="1">Belongs to the PAPS reductase family. CysH subfamily.</text>
</comment>
<feature type="chain" id="PRO_1000075073" description="Adenosine 5'-phosphosulfate reductase">
    <location>
        <begin position="1"/>
        <end position="245"/>
    </location>
</feature>
<feature type="active site" description="Nucleophile; cysteine thiosulfonate intermediate" evidence="1">
    <location>
        <position position="231"/>
    </location>
</feature>
<feature type="binding site" evidence="1">
    <location>
        <position position="124"/>
    </location>
    <ligand>
        <name>[4Fe-4S] cluster</name>
        <dbReference type="ChEBI" id="CHEBI:49883"/>
    </ligand>
</feature>
<feature type="binding site" evidence="1">
    <location>
        <position position="125"/>
    </location>
    <ligand>
        <name>[4Fe-4S] cluster</name>
        <dbReference type="ChEBI" id="CHEBI:49883"/>
    </ligand>
</feature>
<feature type="binding site" evidence="1">
    <location>
        <position position="205"/>
    </location>
    <ligand>
        <name>[4Fe-4S] cluster</name>
        <dbReference type="ChEBI" id="CHEBI:49883"/>
    </ligand>
</feature>
<feature type="binding site" evidence="1">
    <location>
        <position position="208"/>
    </location>
    <ligand>
        <name>[4Fe-4S] cluster</name>
        <dbReference type="ChEBI" id="CHEBI:49883"/>
    </ligand>
</feature>
<organism>
    <name type="scientific">Chelativorans sp. (strain BNC1)</name>
    <dbReference type="NCBI Taxonomy" id="266779"/>
    <lineage>
        <taxon>Bacteria</taxon>
        <taxon>Pseudomonadati</taxon>
        <taxon>Pseudomonadota</taxon>
        <taxon>Alphaproteobacteria</taxon>
        <taxon>Hyphomicrobiales</taxon>
        <taxon>Phyllobacteriaceae</taxon>
        <taxon>Chelativorans</taxon>
    </lineage>
</organism>
<sequence>MAAKPKPLDAEIEALELDARYGHLAAEAIVELAVNRFRDEGGIATVSSFGADSAVLLHMVASVDKSLPVLFLDTGQHFGETIEYRDQLASDLGLSNLVVVHPKSEMLSARDPGNDLHKSDSDLCCEIRKVEPMARAVEPYSAWFTGRKRHQAESRAQMPVFEAVGPRIRINPLARWTTADQAAYMRANDLRENPLVAYGYLSIGCFPCTQPVKPGEDQRSGRWAGLAKTECGIHLPGLEALTNAA</sequence>
<gene>
    <name evidence="1" type="primary">cysH</name>
    <name type="ordered locus">Meso_3992</name>
</gene>
<keyword id="KW-0963">Cytoplasm</keyword>
<keyword id="KW-0408">Iron</keyword>
<keyword id="KW-0411">Iron-sulfur</keyword>
<keyword id="KW-0479">Metal-binding</keyword>
<keyword id="KW-0560">Oxidoreductase</keyword>
<evidence type="ECO:0000255" key="1">
    <source>
        <dbReference type="HAMAP-Rule" id="MF_00063"/>
    </source>
</evidence>
<accession>Q11B66</accession>
<reference key="1">
    <citation type="submission" date="2006-06" db="EMBL/GenBank/DDBJ databases">
        <title>Complete sequence of chromosome of Mesorhizobium sp. BNC1.</title>
        <authorList>
            <consortium name="US DOE Joint Genome Institute"/>
            <person name="Copeland A."/>
            <person name="Lucas S."/>
            <person name="Lapidus A."/>
            <person name="Barry K."/>
            <person name="Detter J.C."/>
            <person name="Glavina del Rio T."/>
            <person name="Hammon N."/>
            <person name="Israni S."/>
            <person name="Dalin E."/>
            <person name="Tice H."/>
            <person name="Pitluck S."/>
            <person name="Chertkov O."/>
            <person name="Brettin T."/>
            <person name="Bruce D."/>
            <person name="Han C."/>
            <person name="Tapia R."/>
            <person name="Gilna P."/>
            <person name="Schmutz J."/>
            <person name="Larimer F."/>
            <person name="Land M."/>
            <person name="Hauser L."/>
            <person name="Kyrpides N."/>
            <person name="Mikhailova N."/>
            <person name="Richardson P."/>
        </authorList>
    </citation>
    <scope>NUCLEOTIDE SEQUENCE [LARGE SCALE GENOMIC DNA]</scope>
    <source>
        <strain>BNC1</strain>
    </source>
</reference>
<proteinExistence type="inferred from homology"/>
<protein>
    <recommendedName>
        <fullName evidence="1">Adenosine 5'-phosphosulfate reductase</fullName>
        <shortName evidence="1">APS reductase</shortName>
        <ecNumber evidence="1">1.8.4.10</ecNumber>
    </recommendedName>
    <alternativeName>
        <fullName evidence="1">5'-adenylylsulfate reductase</fullName>
    </alternativeName>
    <alternativeName>
        <fullName evidence="1">Thioredoxin-dependent 5'-adenylylsulfate reductase</fullName>
    </alternativeName>
</protein>
<dbReference type="EC" id="1.8.4.10" evidence="1"/>
<dbReference type="EMBL" id="CP000390">
    <property type="protein sequence ID" value="ABG65359.1"/>
    <property type="molecule type" value="Genomic_DNA"/>
</dbReference>
<dbReference type="SMR" id="Q11B66"/>
<dbReference type="STRING" id="266779.Meso_3992"/>
<dbReference type="KEGG" id="mes:Meso_3992"/>
<dbReference type="eggNOG" id="COG0175">
    <property type="taxonomic scope" value="Bacteria"/>
</dbReference>
<dbReference type="HOGENOM" id="CLU_044089_2_1_5"/>
<dbReference type="OrthoDB" id="9794018at2"/>
<dbReference type="GO" id="GO:0005737">
    <property type="term" value="C:cytoplasm"/>
    <property type="evidence" value="ECO:0007669"/>
    <property type="project" value="UniProtKB-SubCell"/>
</dbReference>
<dbReference type="GO" id="GO:0051539">
    <property type="term" value="F:4 iron, 4 sulfur cluster binding"/>
    <property type="evidence" value="ECO:0007669"/>
    <property type="project" value="UniProtKB-UniRule"/>
</dbReference>
<dbReference type="GO" id="GO:0043866">
    <property type="term" value="F:adenylyl-sulfate reductase (thioredoxin) activity"/>
    <property type="evidence" value="ECO:0007669"/>
    <property type="project" value="UniProtKB-EC"/>
</dbReference>
<dbReference type="GO" id="GO:0046872">
    <property type="term" value="F:metal ion binding"/>
    <property type="evidence" value="ECO:0007669"/>
    <property type="project" value="UniProtKB-KW"/>
</dbReference>
<dbReference type="GO" id="GO:0004604">
    <property type="term" value="F:phosphoadenylyl-sulfate reductase (thioredoxin) activity"/>
    <property type="evidence" value="ECO:0007669"/>
    <property type="project" value="UniProtKB-UniRule"/>
</dbReference>
<dbReference type="GO" id="GO:0070814">
    <property type="term" value="P:hydrogen sulfide biosynthetic process"/>
    <property type="evidence" value="ECO:0007669"/>
    <property type="project" value="UniProtKB-UniRule"/>
</dbReference>
<dbReference type="GO" id="GO:0019379">
    <property type="term" value="P:sulfate assimilation, phosphoadenylyl sulfate reduction by phosphoadenylyl-sulfate reductase (thioredoxin)"/>
    <property type="evidence" value="ECO:0007669"/>
    <property type="project" value="UniProtKB-UniRule"/>
</dbReference>
<dbReference type="Gene3D" id="3.40.50.620">
    <property type="entry name" value="HUPs"/>
    <property type="match status" value="1"/>
</dbReference>
<dbReference type="HAMAP" id="MF_00063">
    <property type="entry name" value="CysH"/>
    <property type="match status" value="1"/>
</dbReference>
<dbReference type="InterPro" id="IPR004511">
    <property type="entry name" value="PAPS/APS_Rdtase"/>
</dbReference>
<dbReference type="InterPro" id="IPR002500">
    <property type="entry name" value="PAPS_reduct_dom"/>
</dbReference>
<dbReference type="InterPro" id="IPR014729">
    <property type="entry name" value="Rossmann-like_a/b/a_fold"/>
</dbReference>
<dbReference type="NCBIfam" id="TIGR00434">
    <property type="entry name" value="cysH"/>
    <property type="match status" value="1"/>
</dbReference>
<dbReference type="NCBIfam" id="NF002537">
    <property type="entry name" value="PRK02090.1"/>
    <property type="match status" value="1"/>
</dbReference>
<dbReference type="PANTHER" id="PTHR46509">
    <property type="entry name" value="PHOSPHOADENOSINE PHOSPHOSULFATE REDUCTASE"/>
    <property type="match status" value="1"/>
</dbReference>
<dbReference type="PANTHER" id="PTHR46509:SF1">
    <property type="entry name" value="PHOSPHOADENOSINE PHOSPHOSULFATE REDUCTASE"/>
    <property type="match status" value="1"/>
</dbReference>
<dbReference type="Pfam" id="PF01507">
    <property type="entry name" value="PAPS_reduct"/>
    <property type="match status" value="1"/>
</dbReference>
<dbReference type="PIRSF" id="PIRSF000857">
    <property type="entry name" value="PAPS_reductase"/>
    <property type="match status" value="1"/>
</dbReference>
<dbReference type="SUPFAM" id="SSF52402">
    <property type="entry name" value="Adenine nucleotide alpha hydrolases-like"/>
    <property type="match status" value="1"/>
</dbReference>